<gene>
    <name type="ordered locus">CKO_00315</name>
</gene>
<dbReference type="EMBL" id="CP000822">
    <property type="protein sequence ID" value="ABV11478.1"/>
    <property type="molecule type" value="Genomic_DNA"/>
</dbReference>
<dbReference type="RefSeq" id="WP_012131308.1">
    <property type="nucleotide sequence ID" value="NC_009792.1"/>
</dbReference>
<dbReference type="STRING" id="290338.CKO_00315"/>
<dbReference type="GeneID" id="45134590"/>
<dbReference type="KEGG" id="cko:CKO_00315"/>
<dbReference type="HOGENOM" id="CLU_198936_0_0_6"/>
<dbReference type="Proteomes" id="UP000008148">
    <property type="component" value="Chromosome"/>
</dbReference>
<dbReference type="GO" id="GO:0005886">
    <property type="term" value="C:plasma membrane"/>
    <property type="evidence" value="ECO:0007669"/>
    <property type="project" value="UniProtKB-SubCell"/>
</dbReference>
<dbReference type="HAMAP" id="MF_01566">
    <property type="entry name" value="UPF0370"/>
    <property type="match status" value="1"/>
</dbReference>
<dbReference type="InterPro" id="IPR020910">
    <property type="entry name" value="UPF0370"/>
</dbReference>
<dbReference type="NCBIfam" id="NF010185">
    <property type="entry name" value="PRK13664.1"/>
    <property type="match status" value="1"/>
</dbReference>
<dbReference type="Pfam" id="PF13980">
    <property type="entry name" value="UPF0370"/>
    <property type="match status" value="1"/>
</dbReference>
<reference key="1">
    <citation type="submission" date="2007-08" db="EMBL/GenBank/DDBJ databases">
        <authorList>
            <consortium name="The Citrobacter koseri Genome Sequencing Project"/>
            <person name="McClelland M."/>
            <person name="Sanderson E.K."/>
            <person name="Porwollik S."/>
            <person name="Spieth J."/>
            <person name="Clifton W.S."/>
            <person name="Latreille P."/>
            <person name="Courtney L."/>
            <person name="Wang C."/>
            <person name="Pepin K."/>
            <person name="Bhonagiri V."/>
            <person name="Nash W."/>
            <person name="Johnson M."/>
            <person name="Thiruvilangam P."/>
            <person name="Wilson R."/>
        </authorList>
    </citation>
    <scope>NUCLEOTIDE SEQUENCE [LARGE SCALE GENOMIC DNA]</scope>
    <source>
        <strain>ATCC BAA-895 / CDC 4225-83 / SGSC4696</strain>
    </source>
</reference>
<name>Y315_CITK8</name>
<keyword id="KW-1003">Cell membrane</keyword>
<keyword id="KW-0472">Membrane</keyword>
<keyword id="KW-1185">Reference proteome</keyword>
<keyword id="KW-0812">Transmembrane</keyword>
<keyword id="KW-1133">Transmembrane helix</keyword>
<proteinExistence type="inferred from homology"/>
<comment type="subcellular location">
    <subcellularLocation>
        <location evidence="1">Cell membrane</location>
        <topology evidence="1">Single-pass membrane protein</topology>
    </subcellularLocation>
</comment>
<comment type="similarity">
    <text evidence="1">Belongs to the UPF0370 family.</text>
</comment>
<protein>
    <recommendedName>
        <fullName evidence="1">UPF0370 protein CKO_00315</fullName>
    </recommendedName>
</protein>
<organism>
    <name type="scientific">Citrobacter koseri (strain ATCC BAA-895 / CDC 4225-83 / SGSC4696)</name>
    <dbReference type="NCBI Taxonomy" id="290338"/>
    <lineage>
        <taxon>Bacteria</taxon>
        <taxon>Pseudomonadati</taxon>
        <taxon>Pseudomonadota</taxon>
        <taxon>Gammaproteobacteria</taxon>
        <taxon>Enterobacterales</taxon>
        <taxon>Enterobacteriaceae</taxon>
        <taxon>Citrobacter</taxon>
    </lineage>
</organism>
<accession>A8ADB5</accession>
<sequence length="66" mass="8071">MDWLAKYWWILVLVFLVGVLINVIKDLKRVDHKKFLANKPELPPHRDFNDKWDDDDDWPKKDQPKK</sequence>
<evidence type="ECO:0000255" key="1">
    <source>
        <dbReference type="HAMAP-Rule" id="MF_01566"/>
    </source>
</evidence>
<evidence type="ECO:0000256" key="2">
    <source>
        <dbReference type="SAM" id="MobiDB-lite"/>
    </source>
</evidence>
<feature type="chain" id="PRO_1000069079" description="UPF0370 protein CKO_00315">
    <location>
        <begin position="1"/>
        <end position="66"/>
    </location>
</feature>
<feature type="transmembrane region" description="Helical" evidence="1">
    <location>
        <begin position="4"/>
        <end position="24"/>
    </location>
</feature>
<feature type="region of interest" description="Disordered" evidence="2">
    <location>
        <begin position="39"/>
        <end position="66"/>
    </location>
</feature>
<feature type="compositionally biased region" description="Basic and acidic residues" evidence="2">
    <location>
        <begin position="42"/>
        <end position="51"/>
    </location>
</feature>